<sequence>MTSQYSNYSCPLNNIQVNVIGSSRTSDDHFLEQMLTKRKKTNISQDLHYLLLGLNPRELYQISFKLARIDEKKYKFNGNFNEGDYYPHKNSEIPMEDTEEIVHSDGYQTGARWMKTGVYFPKIGISKEQPDKERCLLLESLHAYFPVLVFTTSSGISLEVPVWSQKFVTTMTSSNRSVKRREKRKLEETAGPAAKKTPDIIETTPEDVVPEVYNAQYFYQMQNNTVISSESKFSSPLALQQDLTEDFGTFAQLDAHFNVSVQSCSSSSLSSPAALKHDSTVSSDSDFDDKNSEEFDAVFEYIDQQFSNHDQNPMDQQSKSIDLNQTTWAPQSINNPGYLSTASSPAALNQDSSASEKSSIVRDKKSDENCLDEFDRVFNELDQQFTPKEDQVQDLSNCTTWNQEPINNSIQSNQFINPELFYFIFHKCLIISWPSCLSCCRGSILPQHLRTPPLVPISQLLIISPLVLPPYHNFTTGSATVSPFASTPANMTIFNFTSDSSTTYSNSTTAQVFPDVANTPDLSYFNIAPAVDLSLFIDPFVQSGRDLSIERSIRNFTNTLKKAHRQKKTAILTFQSTEPMQLEFKYCTKMLLRTDKPVGNFSIQLSGPYLEHLLNLSHHLCRFSEYNLFVKAHFPRGSYGSLTSMTGPAVEIPETQENITIIWVKKDFPENVNKYPVAINSLITEAIASNGTNQVLLTSKYPSDCTIRFRKCGFMIEGVLVVKKKETVIIDRQILGELNRLKHDLLQ</sequence>
<keyword id="KW-0238">DNA-binding</keyword>
<keyword id="KW-0539">Nucleus</keyword>
<keyword id="KW-1185">Reference proteome</keyword>
<keyword id="KW-0804">Transcription</keyword>
<keyword id="KW-0805">Transcription regulation</keyword>
<gene>
    <name type="primary">tbx-31</name>
    <name type="ORF">C36C9.2</name>
</gene>
<feature type="chain" id="PRO_0000248069" description="Putative T-box protein 31">
    <location>
        <begin position="1"/>
        <end position="747"/>
    </location>
</feature>
<feature type="DNA-binding region" description="T-box" evidence="1">
    <location>
        <begin position="33"/>
        <end position="199"/>
    </location>
</feature>
<feature type="region of interest" description="Disordered" evidence="2">
    <location>
        <begin position="268"/>
        <end position="289"/>
    </location>
</feature>
<feature type="region of interest" description="Disordered" evidence="2">
    <location>
        <begin position="332"/>
        <end position="364"/>
    </location>
</feature>
<feature type="compositionally biased region" description="Polar residues" evidence="2">
    <location>
        <begin position="332"/>
        <end position="358"/>
    </location>
</feature>
<evidence type="ECO:0000255" key="1">
    <source>
        <dbReference type="PROSITE-ProRule" id="PRU00201"/>
    </source>
</evidence>
<evidence type="ECO:0000256" key="2">
    <source>
        <dbReference type="SAM" id="MobiDB-lite"/>
    </source>
</evidence>
<organism>
    <name type="scientific">Caenorhabditis elegans</name>
    <dbReference type="NCBI Taxonomy" id="6239"/>
    <lineage>
        <taxon>Eukaryota</taxon>
        <taxon>Metazoa</taxon>
        <taxon>Ecdysozoa</taxon>
        <taxon>Nematoda</taxon>
        <taxon>Chromadorea</taxon>
        <taxon>Rhabditida</taxon>
        <taxon>Rhabditina</taxon>
        <taxon>Rhabditomorpha</taxon>
        <taxon>Rhabditoidea</taxon>
        <taxon>Rhabditidae</taxon>
        <taxon>Peloderinae</taxon>
        <taxon>Caenorhabditis</taxon>
    </lineage>
</organism>
<protein>
    <recommendedName>
        <fullName>Putative T-box protein 31</fullName>
    </recommendedName>
</protein>
<comment type="subcellular location">
    <subcellularLocation>
        <location evidence="1">Nucleus</location>
    </subcellularLocation>
</comment>
<dbReference type="EMBL" id="FO080799">
    <property type="protein sequence ID" value="CCD66881.1"/>
    <property type="molecule type" value="Genomic_DNA"/>
</dbReference>
<dbReference type="PIR" id="T33488">
    <property type="entry name" value="T33488"/>
</dbReference>
<dbReference type="RefSeq" id="NP_508308.1">
    <property type="nucleotide sequence ID" value="NM_075907.5"/>
</dbReference>
<dbReference type="SMR" id="Q9TZL0"/>
<dbReference type="STRING" id="6239.C36C9.2.1"/>
<dbReference type="PaxDb" id="6239-C36C9.2"/>
<dbReference type="EnsemblMetazoa" id="C36C9.2.1">
    <property type="protein sequence ID" value="C36C9.2.1"/>
    <property type="gene ID" value="WBGene00006550"/>
</dbReference>
<dbReference type="GeneID" id="183272"/>
<dbReference type="KEGG" id="cel:CELE_C36C9.2"/>
<dbReference type="UCSC" id="C36C9.2">
    <property type="organism name" value="c. elegans"/>
</dbReference>
<dbReference type="AGR" id="WB:WBGene00006550"/>
<dbReference type="CTD" id="183272"/>
<dbReference type="WormBase" id="C36C9.2">
    <property type="protein sequence ID" value="CE19721"/>
    <property type="gene ID" value="WBGene00006550"/>
    <property type="gene designation" value="tbx-31"/>
</dbReference>
<dbReference type="eggNOG" id="KOG3585">
    <property type="taxonomic scope" value="Eukaryota"/>
</dbReference>
<dbReference type="GeneTree" id="ENSGT00970000197570"/>
<dbReference type="HOGENOM" id="CLU_372229_0_0_1"/>
<dbReference type="InParanoid" id="Q9TZL0"/>
<dbReference type="PRO" id="PR:Q9TZL0"/>
<dbReference type="Proteomes" id="UP000001940">
    <property type="component" value="Chromosome X"/>
</dbReference>
<dbReference type="Bgee" id="WBGene00006550">
    <property type="expression patterns" value="Expressed in embryo"/>
</dbReference>
<dbReference type="GO" id="GO:0000785">
    <property type="term" value="C:chromatin"/>
    <property type="evidence" value="ECO:0000318"/>
    <property type="project" value="GO_Central"/>
</dbReference>
<dbReference type="GO" id="GO:0005634">
    <property type="term" value="C:nucleus"/>
    <property type="evidence" value="ECO:0000318"/>
    <property type="project" value="GO_Central"/>
</dbReference>
<dbReference type="GO" id="GO:0000981">
    <property type="term" value="F:DNA-binding transcription factor activity, RNA polymerase II-specific"/>
    <property type="evidence" value="ECO:0000318"/>
    <property type="project" value="GO_Central"/>
</dbReference>
<dbReference type="GO" id="GO:0000978">
    <property type="term" value="F:RNA polymerase II cis-regulatory region sequence-specific DNA binding"/>
    <property type="evidence" value="ECO:0000318"/>
    <property type="project" value="GO_Central"/>
</dbReference>
<dbReference type="GO" id="GO:0001708">
    <property type="term" value="P:cell fate specification"/>
    <property type="evidence" value="ECO:0000318"/>
    <property type="project" value="GO_Central"/>
</dbReference>
<dbReference type="GO" id="GO:0045893">
    <property type="term" value="P:positive regulation of DNA-templated transcription"/>
    <property type="evidence" value="ECO:0007669"/>
    <property type="project" value="InterPro"/>
</dbReference>
<dbReference type="GO" id="GO:0006357">
    <property type="term" value="P:regulation of transcription by RNA polymerase II"/>
    <property type="evidence" value="ECO:0000318"/>
    <property type="project" value="GO_Central"/>
</dbReference>
<dbReference type="FunFam" id="2.60.40.820:FF:000037">
    <property type="entry name" value="Putative T-box protein 31"/>
    <property type="match status" value="1"/>
</dbReference>
<dbReference type="Gene3D" id="2.60.40.820">
    <property type="entry name" value="Transcription factor, T-box"/>
    <property type="match status" value="1"/>
</dbReference>
<dbReference type="InterPro" id="IPR008967">
    <property type="entry name" value="p53-like_TF_DNA-bd_sf"/>
</dbReference>
<dbReference type="InterPro" id="IPR046360">
    <property type="entry name" value="T-box_DNA-bd"/>
</dbReference>
<dbReference type="InterPro" id="IPR036960">
    <property type="entry name" value="T-box_sf"/>
</dbReference>
<dbReference type="InterPro" id="IPR001699">
    <property type="entry name" value="TF_T-box"/>
</dbReference>
<dbReference type="PANTHER" id="PTHR11267:SF189">
    <property type="entry name" value="T-BOX PROTEIN 31-RELATED"/>
    <property type="match status" value="1"/>
</dbReference>
<dbReference type="PANTHER" id="PTHR11267">
    <property type="entry name" value="T-BOX PROTEIN-RELATED"/>
    <property type="match status" value="1"/>
</dbReference>
<dbReference type="Pfam" id="PF00907">
    <property type="entry name" value="T-box"/>
    <property type="match status" value="1"/>
</dbReference>
<dbReference type="SMART" id="SM00425">
    <property type="entry name" value="TBOX"/>
    <property type="match status" value="1"/>
</dbReference>
<dbReference type="SUPFAM" id="SSF49417">
    <property type="entry name" value="p53-like transcription factors"/>
    <property type="match status" value="1"/>
</dbReference>
<dbReference type="PROSITE" id="PS50252">
    <property type="entry name" value="TBOX_3"/>
    <property type="match status" value="1"/>
</dbReference>
<accession>Q9TZL0</accession>
<reference key="1">
    <citation type="journal article" date="1998" name="Science">
        <title>Genome sequence of the nematode C. elegans: a platform for investigating biology.</title>
        <authorList>
            <consortium name="The C. elegans sequencing consortium"/>
        </authorList>
    </citation>
    <scope>NUCLEOTIDE SEQUENCE [LARGE SCALE GENOMIC DNA]</scope>
    <source>
        <strain>Bristol N2</strain>
    </source>
</reference>
<name>TBX31_CAEEL</name>
<proteinExistence type="inferred from homology"/>